<feature type="chain" id="PRO_0000099977" description="Ribosomal small subunit pseudouridine synthase A">
    <location>
        <begin position="1"/>
        <end position="233"/>
    </location>
</feature>
<feature type="domain" description="S4 RNA-binding" evidence="2">
    <location>
        <begin position="1"/>
        <end position="67"/>
    </location>
</feature>
<feature type="active site" description="Nucleophile" evidence="1">
    <location>
        <position position="101"/>
    </location>
</feature>
<keyword id="KW-0413">Isomerase</keyword>
<keyword id="KW-0694">RNA-binding</keyword>
<keyword id="KW-0698">rRNA processing</keyword>
<evidence type="ECO:0000250" key="1"/>
<evidence type="ECO:0000255" key="2">
    <source>
        <dbReference type="PROSITE-ProRule" id="PRU00182"/>
    </source>
</evidence>
<evidence type="ECO:0000305" key="3"/>
<organism>
    <name type="scientific">Vibrio vulnificus (strain CMCP6)</name>
    <dbReference type="NCBI Taxonomy" id="216895"/>
    <lineage>
        <taxon>Bacteria</taxon>
        <taxon>Pseudomonadati</taxon>
        <taxon>Pseudomonadota</taxon>
        <taxon>Gammaproteobacteria</taxon>
        <taxon>Vibrionales</taxon>
        <taxon>Vibrionaceae</taxon>
        <taxon>Vibrio</taxon>
    </lineage>
</organism>
<reference key="1">
    <citation type="submission" date="2002-12" db="EMBL/GenBank/DDBJ databases">
        <title>Complete genome sequence of Vibrio vulnificus CMCP6.</title>
        <authorList>
            <person name="Rhee J.H."/>
            <person name="Kim S.Y."/>
            <person name="Chung S.S."/>
            <person name="Kim J.J."/>
            <person name="Moon Y.H."/>
            <person name="Jeong H."/>
            <person name="Choy H.E."/>
        </authorList>
    </citation>
    <scope>NUCLEOTIDE SEQUENCE [LARGE SCALE GENOMIC DNA]</scope>
    <source>
        <strain>CMCP6</strain>
    </source>
</reference>
<accession>Q8D8X2</accession>
<proteinExistence type="inferred from homology"/>
<dbReference type="EC" id="5.4.99.19"/>
<dbReference type="EMBL" id="AE016795">
    <property type="protein sequence ID" value="AAO11180.1"/>
    <property type="molecule type" value="Genomic_DNA"/>
</dbReference>
<dbReference type="RefSeq" id="WP_011080669.1">
    <property type="nucleotide sequence ID" value="NC_004459.3"/>
</dbReference>
<dbReference type="SMR" id="Q8D8X2"/>
<dbReference type="KEGG" id="vvu:VV1_2843"/>
<dbReference type="HOGENOM" id="CLU_024979_1_2_6"/>
<dbReference type="Proteomes" id="UP000002275">
    <property type="component" value="Chromosome 1"/>
</dbReference>
<dbReference type="GO" id="GO:0160136">
    <property type="term" value="F:16S rRNA pseudouridine(516) synthase activity"/>
    <property type="evidence" value="ECO:0007669"/>
    <property type="project" value="UniProtKB-EC"/>
</dbReference>
<dbReference type="GO" id="GO:0003723">
    <property type="term" value="F:RNA binding"/>
    <property type="evidence" value="ECO:0007669"/>
    <property type="project" value="UniProtKB-KW"/>
</dbReference>
<dbReference type="GO" id="GO:0000455">
    <property type="term" value="P:enzyme-directed rRNA pseudouridine synthesis"/>
    <property type="evidence" value="ECO:0007669"/>
    <property type="project" value="UniProtKB-ARBA"/>
</dbReference>
<dbReference type="CDD" id="cd02553">
    <property type="entry name" value="PseudoU_synth_RsuA"/>
    <property type="match status" value="1"/>
</dbReference>
<dbReference type="CDD" id="cd00165">
    <property type="entry name" value="S4"/>
    <property type="match status" value="1"/>
</dbReference>
<dbReference type="FunFam" id="3.30.70.1560:FF:000001">
    <property type="entry name" value="Pseudouridine synthase"/>
    <property type="match status" value="1"/>
</dbReference>
<dbReference type="Gene3D" id="3.30.70.1560">
    <property type="entry name" value="Alpha-L RNA-binding motif"/>
    <property type="match status" value="1"/>
</dbReference>
<dbReference type="Gene3D" id="3.30.70.580">
    <property type="entry name" value="Pseudouridine synthase I, catalytic domain, N-terminal subdomain"/>
    <property type="match status" value="1"/>
</dbReference>
<dbReference type="Gene3D" id="3.10.290.10">
    <property type="entry name" value="RNA-binding S4 domain"/>
    <property type="match status" value="1"/>
</dbReference>
<dbReference type="InterPro" id="IPR042092">
    <property type="entry name" value="PsdUridine_s_RsuA/RluB/E/F_cat"/>
</dbReference>
<dbReference type="InterPro" id="IPR020103">
    <property type="entry name" value="PsdUridine_synth_cat_dom_sf"/>
</dbReference>
<dbReference type="InterPro" id="IPR006145">
    <property type="entry name" value="PsdUridine_synth_RsuA/RluA"/>
</dbReference>
<dbReference type="InterPro" id="IPR000748">
    <property type="entry name" value="PsdUridine_synth_RsuA/RluB/E/F"/>
</dbReference>
<dbReference type="InterPro" id="IPR018496">
    <property type="entry name" value="PsdUridine_synth_RsuA/RluB_CS"/>
</dbReference>
<dbReference type="InterPro" id="IPR050343">
    <property type="entry name" value="RsuA_PseudoU_synthase"/>
</dbReference>
<dbReference type="InterPro" id="IPR002942">
    <property type="entry name" value="S4_RNA-bd"/>
</dbReference>
<dbReference type="InterPro" id="IPR036986">
    <property type="entry name" value="S4_RNA-bd_sf"/>
</dbReference>
<dbReference type="InterPro" id="IPR020094">
    <property type="entry name" value="TruA/RsuA/RluB/E/F_N"/>
</dbReference>
<dbReference type="NCBIfam" id="NF008097">
    <property type="entry name" value="PRK10839.1"/>
    <property type="match status" value="1"/>
</dbReference>
<dbReference type="NCBIfam" id="TIGR00093">
    <property type="entry name" value="pseudouridine synthase"/>
    <property type="match status" value="1"/>
</dbReference>
<dbReference type="PANTHER" id="PTHR47683:SF4">
    <property type="entry name" value="PSEUDOURIDINE SYNTHASE"/>
    <property type="match status" value="1"/>
</dbReference>
<dbReference type="PANTHER" id="PTHR47683">
    <property type="entry name" value="PSEUDOURIDINE SYNTHASE FAMILY PROTEIN-RELATED"/>
    <property type="match status" value="1"/>
</dbReference>
<dbReference type="Pfam" id="PF00849">
    <property type="entry name" value="PseudoU_synth_2"/>
    <property type="match status" value="1"/>
</dbReference>
<dbReference type="Pfam" id="PF01479">
    <property type="entry name" value="S4"/>
    <property type="match status" value="1"/>
</dbReference>
<dbReference type="SMART" id="SM00363">
    <property type="entry name" value="S4"/>
    <property type="match status" value="1"/>
</dbReference>
<dbReference type="SUPFAM" id="SSF55174">
    <property type="entry name" value="Alpha-L RNA-binding motif"/>
    <property type="match status" value="1"/>
</dbReference>
<dbReference type="SUPFAM" id="SSF55120">
    <property type="entry name" value="Pseudouridine synthase"/>
    <property type="match status" value="1"/>
</dbReference>
<dbReference type="PROSITE" id="PS01149">
    <property type="entry name" value="PSI_RSU"/>
    <property type="match status" value="1"/>
</dbReference>
<dbReference type="PROSITE" id="PS50889">
    <property type="entry name" value="S4"/>
    <property type="match status" value="1"/>
</dbReference>
<gene>
    <name type="primary">rsuA</name>
    <name type="ordered locus">VV1_2843</name>
</gene>
<protein>
    <recommendedName>
        <fullName>Ribosomal small subunit pseudouridine synthase A</fullName>
        <ecNumber>5.4.99.19</ecNumber>
    </recommendedName>
    <alternativeName>
        <fullName>16S pseudouridylate 516 synthase</fullName>
    </alternativeName>
    <alternativeName>
        <fullName>16S rRNA pseudouridine(516) synthase</fullName>
    </alternativeName>
    <alternativeName>
        <fullName>rRNA pseudouridylate synthase A</fullName>
    </alternativeName>
    <alternativeName>
        <fullName>rRNA-uridine isomerase A</fullName>
    </alternativeName>
</protein>
<sequence>MRLDKFLCDALGATRKEATKILKSGEVTVNEQVQKSGAVKVTEECVVEWQGRELAMQGPRYIMLYKPEGFVCSHEDGFNHTAFVLLDEVKMDELHFAGRLDVDTTGLVLITDDGKWSHRITSPKHKCDKTYRVWLADPIGSDYAEKLAEGVQLRNEKELTLPAQMTIVNADENEVLLTIHEGKYHQVKRMFAALGNKVEQLHRERIGAIELDESLEPGEYRYLTQEEIDSVWK</sequence>
<comment type="function">
    <text evidence="1">Responsible for synthesis of pseudouridine from uracil-516 in 16S ribosomal RNA.</text>
</comment>
<comment type="catalytic activity">
    <reaction>
        <text>uridine(516) in 16S rRNA = pseudouridine(516) in 16S rRNA</text>
        <dbReference type="Rhea" id="RHEA:38867"/>
        <dbReference type="Rhea" id="RHEA-COMP:10089"/>
        <dbReference type="Rhea" id="RHEA-COMP:10090"/>
        <dbReference type="ChEBI" id="CHEBI:65314"/>
        <dbReference type="ChEBI" id="CHEBI:65315"/>
        <dbReference type="EC" id="5.4.99.19"/>
    </reaction>
</comment>
<comment type="similarity">
    <text evidence="3">Belongs to the pseudouridine synthase RsuA family.</text>
</comment>
<name>RSUA_VIBVU</name>